<gene>
    <name type="primary">VPS54</name>
    <name type="synonym">HCC8</name>
</gene>
<keyword id="KW-0025">Alternative splicing</keyword>
<keyword id="KW-0175">Coiled coil</keyword>
<keyword id="KW-0333">Golgi apparatus</keyword>
<keyword id="KW-0472">Membrane</keyword>
<keyword id="KW-0597">Phosphoprotein</keyword>
<keyword id="KW-0653">Protein transport</keyword>
<keyword id="KW-1267">Proteomics identification</keyword>
<keyword id="KW-1185">Reference proteome</keyword>
<keyword id="KW-0813">Transport</keyword>
<sequence>MASSHSSSPVPQGSSSDVFFKIEVDPSKHIRPVPSLPDVCPKEPTGDSHSLYVAPSLVTDQHRWTVYHSKVNLPAALNDPRLAKRESDFFTKTWGLDFVDTEVIPSFYLPQISKEHFTVYQQEISQREKIHERCKNICPPKDTFERTLLHTHDKSRTDLEQVPKIFMKPDFALDDSLTFNSVLPWSHFNTAGGKGNRDAASSKLLQEKLSHYLDIVEVNIAHQISLRSEAFFHAMTSQHELQDYLRKTSQAVKMLRDKIAQIDKVMCEGSLHILRLALTRNNCVKVYNKLKLMATVHQTQPTVQVLLSTSEFVGALDLIATTQEVLQQELQGIHSFRHLGSQLCELEKLIDKMMIAEFSTYSHSDLNRPLEDDCQVLEEERLISLVFGLLKQRKLNFLEIYGEKMVITAKNIIKQCVINKVSQTEEIDTDVVVKLADQMRMLNFPQWFDLLKDIFSKFTIFLQRVKATLNIIHSVVLSVLDKNQRTRELEEISQQKNAAKDNSLDTEVAYLIHEGMFISDAFGEGELTPIAVDTTSQRNASPNSEPCSSDSVSEPECTTDSSSSKEHTSSSAIPGGVDIMVSEDMKLTDSELGKLANNIQELLYSASDICHDRAVKFLMSRAKDGFLEKLNSMEFITLSRLMETFILDTEQICGRKSTSLLGALQSQAIKFVNRFHEERKTKLSLLLDNERWKQADVPAEFQDLVDSLSDGKIALPEKKSGATEERKPAEVLIVEGQQYAVVGTVLLLIRIILEYCQCVDNIPSVTTDMLTRLSDLLKYFNSRSCQLVLGAGALQVVGLKTITTKNLALSSRCLQLIVHYIPVIRAHFEARLPPKQYSMLRHFDHITKDYHDHIAEISAKLVAIMDSLFDKLLSKYEVKAPVPSACFRNICKQMTKMHEAIFDLLPEEQTQMLFLRINASYKLHLKKQLSHLNVINDGGPQNGLVTADVAFYTGNLQALKGLKDLDLNMAEIWEQKR</sequence>
<proteinExistence type="evidence at protein level"/>
<protein>
    <recommendedName>
        <fullName>Vacuolar protein sorting-associated protein 54</fullName>
    </recommendedName>
    <alternativeName>
        <fullName>Hepatocellular carcinoma protein 8</fullName>
    </alternativeName>
    <alternativeName>
        <fullName>Tumor antigen HOM-HCC-8</fullName>
    </alternativeName>
    <alternativeName>
        <fullName>Tumor antigen SLP-8p</fullName>
    </alternativeName>
</protein>
<evidence type="ECO:0000250" key="1">
    <source>
        <dbReference type="UniProtKB" id="Q9JMK8"/>
    </source>
</evidence>
<evidence type="ECO:0000255" key="2"/>
<evidence type="ECO:0000256" key="3">
    <source>
        <dbReference type="SAM" id="MobiDB-lite"/>
    </source>
</evidence>
<evidence type="ECO:0000269" key="4">
    <source>
    </source>
</evidence>
<evidence type="ECO:0000269" key="5">
    <source>
    </source>
</evidence>
<evidence type="ECO:0000269" key="6">
    <source>
    </source>
</evidence>
<evidence type="ECO:0000269" key="7">
    <source>
    </source>
</evidence>
<evidence type="ECO:0000269" key="8">
    <source>
    </source>
</evidence>
<evidence type="ECO:0000303" key="9">
    <source>
    </source>
</evidence>
<evidence type="ECO:0000303" key="10">
    <source>
    </source>
</evidence>
<evidence type="ECO:0000303" key="11">
    <source ref="1"/>
</evidence>
<evidence type="ECO:0000305" key="12"/>
<evidence type="ECO:0007744" key="13">
    <source>
    </source>
</evidence>
<reference key="1">
    <citation type="submission" date="1998-10" db="EMBL/GenBank/DDBJ databases">
        <title>HOM-HCC-8, a novel tumor antigen associated with hepatocellular carcinoma.</title>
        <authorList>
            <person name="Stenner-Liewen F."/>
            <person name="Luo G."/>
            <person name="Tuereci O."/>
            <person name="Sahin U."/>
            <person name="Liewen H."/>
            <person name="Koslowski M."/>
            <person name="Pfreundschuh M."/>
        </authorList>
    </citation>
    <scope>NUCLEOTIDE SEQUENCE [MRNA] (ISOFORM 2)</scope>
    <source>
        <tissue>Hepatoma</tissue>
    </source>
</reference>
<reference key="2">
    <citation type="journal article" date="2005" name="Exp. Cell Res.">
        <title>Characterization of the human GARP (Golgi associated retrograde protein) complex.</title>
        <authorList>
            <person name="Liewen H."/>
            <person name="Meinhold-Heerlein I."/>
            <person name="Oliveira V."/>
            <person name="Schwarzenbacher R."/>
            <person name="Luo G."/>
            <person name="Wadle A."/>
            <person name="Jung M."/>
            <person name="Pfreundschuh M."/>
            <person name="Stenner-Liewen F."/>
        </authorList>
    </citation>
    <scope>NUCLEOTIDE SEQUENCE [MRNA] (ISOFORM 1)</scope>
    <scope>SUBUNIT</scope>
</reference>
<reference key="3">
    <citation type="journal article" date="2007" name="BMC Genomics">
        <title>The full-ORF clone resource of the German cDNA consortium.</title>
        <authorList>
            <person name="Bechtel S."/>
            <person name="Rosenfelder H."/>
            <person name="Duda A."/>
            <person name="Schmidt C.P."/>
            <person name="Ernst U."/>
            <person name="Wellenreuther R."/>
            <person name="Mehrle A."/>
            <person name="Schuster C."/>
            <person name="Bahr A."/>
            <person name="Bloecker H."/>
            <person name="Heubner D."/>
            <person name="Hoerlein A."/>
            <person name="Michel G."/>
            <person name="Wedler H."/>
            <person name="Koehrer K."/>
            <person name="Ottenwaelder B."/>
            <person name="Poustka A."/>
            <person name="Wiemann S."/>
            <person name="Schupp I."/>
        </authorList>
    </citation>
    <scope>NUCLEOTIDE SEQUENCE [LARGE SCALE MRNA] (ISOFORM 5)</scope>
    <source>
        <tissue>Testis</tissue>
    </source>
</reference>
<reference key="4">
    <citation type="journal article" date="2004" name="Genome Res.">
        <title>The status, quality, and expansion of the NIH full-length cDNA project: the Mammalian Gene Collection (MGC).</title>
        <authorList>
            <consortium name="The MGC Project Team"/>
        </authorList>
    </citation>
    <scope>NUCLEOTIDE SEQUENCE [LARGE SCALE MRNA] (ISOFORMS 3 AND 4)</scope>
    <source>
        <tissue>Skin</tissue>
        <tissue>Testis</tissue>
    </source>
</reference>
<reference key="5">
    <citation type="journal article" date="2004" name="Nat. Genet.">
        <title>Complete sequencing and characterization of 21,243 full-length human cDNAs.</title>
        <authorList>
            <person name="Ota T."/>
            <person name="Suzuki Y."/>
            <person name="Nishikawa T."/>
            <person name="Otsuki T."/>
            <person name="Sugiyama T."/>
            <person name="Irie R."/>
            <person name="Wakamatsu A."/>
            <person name="Hayashi K."/>
            <person name="Sato H."/>
            <person name="Nagai K."/>
            <person name="Kimura K."/>
            <person name="Makita H."/>
            <person name="Sekine M."/>
            <person name="Obayashi M."/>
            <person name="Nishi T."/>
            <person name="Shibahara T."/>
            <person name="Tanaka T."/>
            <person name="Ishii S."/>
            <person name="Yamamoto J."/>
            <person name="Saito K."/>
            <person name="Kawai Y."/>
            <person name="Isono Y."/>
            <person name="Nakamura Y."/>
            <person name="Nagahari K."/>
            <person name="Murakami K."/>
            <person name="Yasuda T."/>
            <person name="Iwayanagi T."/>
            <person name="Wagatsuma M."/>
            <person name="Shiratori A."/>
            <person name="Sudo H."/>
            <person name="Hosoiri T."/>
            <person name="Kaku Y."/>
            <person name="Kodaira H."/>
            <person name="Kondo H."/>
            <person name="Sugawara M."/>
            <person name="Takahashi M."/>
            <person name="Kanda K."/>
            <person name="Yokoi T."/>
            <person name="Furuya T."/>
            <person name="Kikkawa E."/>
            <person name="Omura Y."/>
            <person name="Abe K."/>
            <person name="Kamihara K."/>
            <person name="Katsuta N."/>
            <person name="Sato K."/>
            <person name="Tanikawa M."/>
            <person name="Yamazaki M."/>
            <person name="Ninomiya K."/>
            <person name="Ishibashi T."/>
            <person name="Yamashita H."/>
            <person name="Murakawa K."/>
            <person name="Fujimori K."/>
            <person name="Tanai H."/>
            <person name="Kimata M."/>
            <person name="Watanabe M."/>
            <person name="Hiraoka S."/>
            <person name="Chiba Y."/>
            <person name="Ishida S."/>
            <person name="Ono Y."/>
            <person name="Takiguchi S."/>
            <person name="Watanabe S."/>
            <person name="Yosida M."/>
            <person name="Hotuta T."/>
            <person name="Kusano J."/>
            <person name="Kanehori K."/>
            <person name="Takahashi-Fujii A."/>
            <person name="Hara H."/>
            <person name="Tanase T.-O."/>
            <person name="Nomura Y."/>
            <person name="Togiya S."/>
            <person name="Komai F."/>
            <person name="Hara R."/>
            <person name="Takeuchi K."/>
            <person name="Arita M."/>
            <person name="Imose N."/>
            <person name="Musashino K."/>
            <person name="Yuuki H."/>
            <person name="Oshima A."/>
            <person name="Sasaki N."/>
            <person name="Aotsuka S."/>
            <person name="Yoshikawa Y."/>
            <person name="Matsunawa H."/>
            <person name="Ichihara T."/>
            <person name="Shiohata N."/>
            <person name="Sano S."/>
            <person name="Moriya S."/>
            <person name="Momiyama H."/>
            <person name="Satoh N."/>
            <person name="Takami S."/>
            <person name="Terashima Y."/>
            <person name="Suzuki O."/>
            <person name="Nakagawa S."/>
            <person name="Senoh A."/>
            <person name="Mizoguchi H."/>
            <person name="Goto Y."/>
            <person name="Shimizu F."/>
            <person name="Wakebe H."/>
            <person name="Hishigaki H."/>
            <person name="Watanabe T."/>
            <person name="Sugiyama A."/>
            <person name="Takemoto M."/>
            <person name="Kawakami B."/>
            <person name="Yamazaki M."/>
            <person name="Watanabe K."/>
            <person name="Kumagai A."/>
            <person name="Itakura S."/>
            <person name="Fukuzumi Y."/>
            <person name="Fujimori Y."/>
            <person name="Komiyama M."/>
            <person name="Tashiro H."/>
            <person name="Tanigami A."/>
            <person name="Fujiwara T."/>
            <person name="Ono T."/>
            <person name="Yamada K."/>
            <person name="Fujii Y."/>
            <person name="Ozaki K."/>
            <person name="Hirao M."/>
            <person name="Ohmori Y."/>
            <person name="Kawabata A."/>
            <person name="Hikiji T."/>
            <person name="Kobatake N."/>
            <person name="Inagaki H."/>
            <person name="Ikema Y."/>
            <person name="Okamoto S."/>
            <person name="Okitani R."/>
            <person name="Kawakami T."/>
            <person name="Noguchi S."/>
            <person name="Itoh T."/>
            <person name="Shigeta K."/>
            <person name="Senba T."/>
            <person name="Matsumura K."/>
            <person name="Nakajima Y."/>
            <person name="Mizuno T."/>
            <person name="Morinaga M."/>
            <person name="Sasaki M."/>
            <person name="Togashi T."/>
            <person name="Oyama M."/>
            <person name="Hata H."/>
            <person name="Watanabe M."/>
            <person name="Komatsu T."/>
            <person name="Mizushima-Sugano J."/>
            <person name="Satoh T."/>
            <person name="Shirai Y."/>
            <person name="Takahashi Y."/>
            <person name="Nakagawa K."/>
            <person name="Okumura K."/>
            <person name="Nagase T."/>
            <person name="Nomura N."/>
            <person name="Kikuchi H."/>
            <person name="Masuho Y."/>
            <person name="Yamashita R."/>
            <person name="Nakai K."/>
            <person name="Yada T."/>
            <person name="Nakamura Y."/>
            <person name="Ohara O."/>
            <person name="Isogai T."/>
            <person name="Sugano S."/>
        </authorList>
    </citation>
    <scope>NUCLEOTIDE SEQUENCE [LARGE SCALE MRNA] OF 579-977</scope>
    <source>
        <tissue>Placenta</tissue>
    </source>
</reference>
<reference key="6">
    <citation type="journal article" date="2008" name="Mol. Biol. Cell">
        <title>Requirement of the human GARP complex for mannose 6-phosphate-receptor-dependent sorting of cathepsin D to lysosomes.</title>
        <authorList>
            <person name="Perez-Victoria F.J."/>
            <person name="Mardones G.A."/>
            <person name="Bonifacino J.S."/>
        </authorList>
    </citation>
    <scope>FUNCTION</scope>
    <scope>SUBCELLULAR LOCATION</scope>
</reference>
<reference key="7">
    <citation type="journal article" date="2010" name="Mol. Biol. Cell">
        <title>Ang2/fat-free is a conserved subunit of the Golgi-associated retrograde protein complex.</title>
        <authorList>
            <person name="Perez-Victoria F.J."/>
            <person name="Schindler C."/>
            <person name="Magadan J.G."/>
            <person name="Mardones G.A."/>
            <person name="Delevoye C."/>
            <person name="Romao M."/>
            <person name="Raposo G."/>
            <person name="Bonifacino J.S."/>
        </authorList>
    </citation>
    <scope>INTERACTION WITH VPS51</scope>
</reference>
<reference key="8">
    <citation type="journal article" date="2013" name="J. Proteome Res.">
        <title>Toward a comprehensive characterization of a human cancer cell phosphoproteome.</title>
        <authorList>
            <person name="Zhou H."/>
            <person name="Di Palma S."/>
            <person name="Preisinger C."/>
            <person name="Peng M."/>
            <person name="Polat A.N."/>
            <person name="Heck A.J."/>
            <person name="Mohammed S."/>
        </authorList>
    </citation>
    <scope>PHOSPHORYLATION [LARGE SCALE ANALYSIS] AT SER-8</scope>
    <scope>IDENTIFICATION BY MASS SPECTROMETRY [LARGE SCALE ANALYSIS]</scope>
    <source>
        <tissue>Cervix carcinoma</tissue>
        <tissue>Erythroleukemia</tissue>
    </source>
</reference>
<reference key="9">
    <citation type="journal article" date="2015" name="Nat. Cell Biol.">
        <title>EARP is a multisubunit tethering complex involved in endocytic recycling.</title>
        <authorList>
            <person name="Schindler C."/>
            <person name="Chen Y."/>
            <person name="Pu J."/>
            <person name="Guo X."/>
            <person name="Bonifacino J.S."/>
        </authorList>
    </citation>
    <scope>FUNCTION</scope>
    <scope>SUBCELLULAR LOCATION</scope>
    <scope>IDENTIFICATION IN THE GARP COMPLEX</scope>
</reference>
<reference key="10">
    <citation type="journal article" date="2016" name="Mol. Biol. Cell">
        <title>TSSC1 is novel component of the endosomal retrieval machinery.</title>
        <authorList>
            <person name="Gershlick D.C."/>
            <person name="Schindler C."/>
            <person name="Chen Y."/>
            <person name="Bonifacino J.S."/>
        </authorList>
    </citation>
    <scope>IDENTIFICATION IN THE GARP COMPLEX</scope>
    <scope>INTERACTION WITH EIPR1</scope>
</reference>
<reference key="11">
    <citation type="journal article" date="2020" name="Mol. Biol. Cell">
        <title>EIPR1 controls dense-core vesicle cargo retention and EARP complex localization in insulin-secreting cells.</title>
        <authorList>
            <person name="Topalidou I."/>
            <person name="Cattin-Ortola J."/>
            <person name="Hummer B."/>
            <person name="Asensio C.S."/>
            <person name="Ailion M."/>
        </authorList>
    </citation>
    <scope>INTERACTION WITH VPS51</scope>
</reference>
<dbReference type="EMBL" id="AF102177">
    <property type="protein sequence ID" value="AAF37319.1"/>
    <property type="molecule type" value="mRNA"/>
</dbReference>
<dbReference type="EMBL" id="AY444798">
    <property type="protein sequence ID" value="AAS20945.1"/>
    <property type="molecule type" value="mRNA"/>
</dbReference>
<dbReference type="EMBL" id="AL137604">
    <property type="protein sequence ID" value="CAB70837.1"/>
    <property type="molecule type" value="mRNA"/>
</dbReference>
<dbReference type="EMBL" id="AL359939">
    <property type="protein sequence ID" value="CAB95772.1"/>
    <property type="molecule type" value="mRNA"/>
</dbReference>
<dbReference type="EMBL" id="CR749701">
    <property type="protein sequence ID" value="CAH18479.1"/>
    <property type="molecule type" value="mRNA"/>
</dbReference>
<dbReference type="EMBL" id="BC030275">
    <property type="protein sequence ID" value="AAH30275.1"/>
    <property type="molecule type" value="mRNA"/>
</dbReference>
<dbReference type="EMBL" id="BC041868">
    <property type="protein sequence ID" value="AAH41868.1"/>
    <property type="molecule type" value="mRNA"/>
</dbReference>
<dbReference type="EMBL" id="AK002205">
    <property type="protein sequence ID" value="BAA92134.1"/>
    <property type="status" value="ALT_INIT"/>
    <property type="molecule type" value="mRNA"/>
</dbReference>
<dbReference type="CCDS" id="CCDS33208.1">
    <molecule id="Q9P1Q0-1"/>
</dbReference>
<dbReference type="CCDS" id="CCDS46302.1">
    <molecule id="Q9P1Q0-4"/>
</dbReference>
<dbReference type="PIR" id="T46308">
    <property type="entry name" value="T46308"/>
</dbReference>
<dbReference type="RefSeq" id="NP_001005739.1">
    <molecule id="Q9P1Q0-4"/>
    <property type="nucleotide sequence ID" value="NM_001005739.2"/>
</dbReference>
<dbReference type="RefSeq" id="NP_057600.2">
    <molecule id="Q9P1Q0-1"/>
    <property type="nucleotide sequence ID" value="NM_016516.3"/>
</dbReference>
<dbReference type="RefSeq" id="XP_047300683.1">
    <molecule id="Q9P1Q0-1"/>
    <property type="nucleotide sequence ID" value="XM_047444727.1"/>
</dbReference>
<dbReference type="RefSeq" id="XP_047300684.1">
    <molecule id="Q9P1Q0-1"/>
    <property type="nucleotide sequence ID" value="XM_047444728.1"/>
</dbReference>
<dbReference type="RefSeq" id="XP_047300685.1">
    <molecule id="Q9P1Q0-4"/>
    <property type="nucleotide sequence ID" value="XM_047444729.1"/>
</dbReference>
<dbReference type="RefSeq" id="XP_054198494.1">
    <molecule id="Q9P1Q0-1"/>
    <property type="nucleotide sequence ID" value="XM_054342519.1"/>
</dbReference>
<dbReference type="RefSeq" id="XP_054198495.1">
    <molecule id="Q9P1Q0-4"/>
    <property type="nucleotide sequence ID" value="XM_054342520.1"/>
</dbReference>
<dbReference type="SMR" id="Q9P1Q0"/>
<dbReference type="BioGRID" id="119600">
    <property type="interactions" value="45"/>
</dbReference>
<dbReference type="ComplexPortal" id="CPX-6208">
    <property type="entry name" value="GARP tethering complex"/>
</dbReference>
<dbReference type="CORUM" id="Q9P1Q0"/>
<dbReference type="DIP" id="DIP-61627N"/>
<dbReference type="FunCoup" id="Q9P1Q0">
    <property type="interactions" value="2476"/>
</dbReference>
<dbReference type="IntAct" id="Q9P1Q0">
    <property type="interactions" value="32"/>
</dbReference>
<dbReference type="MINT" id="Q9P1Q0"/>
<dbReference type="STRING" id="9606.ENSP00000272322"/>
<dbReference type="GlyGen" id="Q9P1Q0">
    <property type="glycosylation" value="1 site, 1 O-linked glycan (1 site)"/>
</dbReference>
<dbReference type="iPTMnet" id="Q9P1Q0"/>
<dbReference type="PhosphoSitePlus" id="Q9P1Q0"/>
<dbReference type="BioMuta" id="VPS54"/>
<dbReference type="DMDM" id="82583721"/>
<dbReference type="jPOST" id="Q9P1Q0"/>
<dbReference type="MassIVE" id="Q9P1Q0"/>
<dbReference type="PaxDb" id="9606-ENSP00000272322"/>
<dbReference type="PeptideAtlas" id="Q9P1Q0"/>
<dbReference type="ProteomicsDB" id="83656">
    <molecule id="Q9P1Q0-1"/>
</dbReference>
<dbReference type="ProteomicsDB" id="83657">
    <molecule id="Q9P1Q0-2"/>
</dbReference>
<dbReference type="ProteomicsDB" id="83658">
    <molecule id="Q9P1Q0-3"/>
</dbReference>
<dbReference type="ProteomicsDB" id="83659">
    <molecule id="Q9P1Q0-4"/>
</dbReference>
<dbReference type="ProteomicsDB" id="83660">
    <molecule id="Q9P1Q0-5"/>
</dbReference>
<dbReference type="Pumba" id="Q9P1Q0"/>
<dbReference type="Antibodypedia" id="30808">
    <property type="antibodies" value="152 antibodies from 26 providers"/>
</dbReference>
<dbReference type="DNASU" id="51542"/>
<dbReference type="Ensembl" id="ENST00000272322.9">
    <molecule id="Q9P1Q0-1"/>
    <property type="protein sequence ID" value="ENSP00000272322.4"/>
    <property type="gene ID" value="ENSG00000143952.20"/>
</dbReference>
<dbReference type="Ensembl" id="ENST00000354504.7">
    <molecule id="Q9P1Q0-3"/>
    <property type="protein sequence ID" value="ENSP00000346499.3"/>
    <property type="gene ID" value="ENSG00000143952.20"/>
</dbReference>
<dbReference type="Ensembl" id="ENST00000409558.8">
    <molecule id="Q9P1Q0-4"/>
    <property type="protein sequence ID" value="ENSP00000386980.3"/>
    <property type="gene ID" value="ENSG00000143952.20"/>
</dbReference>
<dbReference type="GeneID" id="51542"/>
<dbReference type="KEGG" id="hsa:51542"/>
<dbReference type="MANE-Select" id="ENST00000272322.9">
    <property type="protein sequence ID" value="ENSP00000272322.4"/>
    <property type="RefSeq nucleotide sequence ID" value="NM_016516.3"/>
    <property type="RefSeq protein sequence ID" value="NP_057600.2"/>
</dbReference>
<dbReference type="UCSC" id="uc002scp.4">
    <molecule id="Q9P1Q0-1"/>
    <property type="organism name" value="human"/>
</dbReference>
<dbReference type="AGR" id="HGNC:18652"/>
<dbReference type="CTD" id="51542"/>
<dbReference type="DisGeNET" id="51542"/>
<dbReference type="GeneCards" id="VPS54"/>
<dbReference type="HGNC" id="HGNC:18652">
    <property type="gene designation" value="VPS54"/>
</dbReference>
<dbReference type="HPA" id="ENSG00000143952">
    <property type="expression patterns" value="Low tissue specificity"/>
</dbReference>
<dbReference type="MalaCards" id="VPS54"/>
<dbReference type="MIM" id="614633">
    <property type="type" value="gene"/>
</dbReference>
<dbReference type="neXtProt" id="NX_Q9P1Q0"/>
<dbReference type="OpenTargets" id="ENSG00000143952"/>
<dbReference type="PharmGKB" id="PA134920394"/>
<dbReference type="VEuPathDB" id="HostDB:ENSG00000143952"/>
<dbReference type="eggNOG" id="KOG2115">
    <property type="taxonomic scope" value="Eukaryota"/>
</dbReference>
<dbReference type="GeneTree" id="ENSGT00390000000583"/>
<dbReference type="HOGENOM" id="CLU_005185_1_0_1"/>
<dbReference type="InParanoid" id="Q9P1Q0"/>
<dbReference type="OMA" id="QKQAVML"/>
<dbReference type="OrthoDB" id="10259024at2759"/>
<dbReference type="PAN-GO" id="Q9P1Q0">
    <property type="GO annotations" value="4 GO annotations based on evolutionary models"/>
</dbReference>
<dbReference type="PhylomeDB" id="Q9P1Q0"/>
<dbReference type="TreeFam" id="TF313700"/>
<dbReference type="PathwayCommons" id="Q9P1Q0"/>
<dbReference type="Reactome" id="R-HSA-6811440">
    <property type="pathway name" value="Retrograde transport at the Trans-Golgi-Network"/>
</dbReference>
<dbReference type="SignaLink" id="Q9P1Q0"/>
<dbReference type="BioGRID-ORCS" id="51542">
    <property type="hits" value="251 hits in 1175 CRISPR screens"/>
</dbReference>
<dbReference type="ChiTaRS" id="VPS54">
    <property type="organism name" value="human"/>
</dbReference>
<dbReference type="GenomeRNAi" id="51542"/>
<dbReference type="Pharos" id="Q9P1Q0">
    <property type="development level" value="Tbio"/>
</dbReference>
<dbReference type="PRO" id="PR:Q9P1Q0"/>
<dbReference type="Proteomes" id="UP000005640">
    <property type="component" value="Chromosome 2"/>
</dbReference>
<dbReference type="RNAct" id="Q9P1Q0">
    <property type="molecule type" value="protein"/>
</dbReference>
<dbReference type="Bgee" id="ENSG00000143952">
    <property type="expression patterns" value="Expressed in sperm and 195 other cell types or tissues"/>
</dbReference>
<dbReference type="ExpressionAtlas" id="Q9P1Q0">
    <property type="expression patterns" value="baseline and differential"/>
</dbReference>
<dbReference type="GO" id="GO:0005829">
    <property type="term" value="C:cytosol"/>
    <property type="evidence" value="ECO:0007669"/>
    <property type="project" value="GOC"/>
</dbReference>
<dbReference type="GO" id="GO:0000938">
    <property type="term" value="C:GARP complex"/>
    <property type="evidence" value="ECO:0000314"/>
    <property type="project" value="UniProtKB"/>
</dbReference>
<dbReference type="GO" id="GO:0005794">
    <property type="term" value="C:Golgi apparatus"/>
    <property type="evidence" value="ECO:0000314"/>
    <property type="project" value="HPA"/>
</dbReference>
<dbReference type="GO" id="GO:0016020">
    <property type="term" value="C:membrane"/>
    <property type="evidence" value="ECO:0000250"/>
    <property type="project" value="UniProtKB"/>
</dbReference>
<dbReference type="GO" id="GO:0005739">
    <property type="term" value="C:mitochondrion"/>
    <property type="evidence" value="ECO:0007669"/>
    <property type="project" value="Ensembl"/>
</dbReference>
<dbReference type="GO" id="GO:0005654">
    <property type="term" value="C:nucleoplasm"/>
    <property type="evidence" value="ECO:0000314"/>
    <property type="project" value="HPA"/>
</dbReference>
<dbReference type="GO" id="GO:0048471">
    <property type="term" value="C:perinuclear region of cytoplasm"/>
    <property type="evidence" value="ECO:0000314"/>
    <property type="project" value="UniProtKB"/>
</dbReference>
<dbReference type="GO" id="GO:0045202">
    <property type="term" value="C:synapse"/>
    <property type="evidence" value="ECO:0007669"/>
    <property type="project" value="GOC"/>
</dbReference>
<dbReference type="GO" id="GO:0005802">
    <property type="term" value="C:trans-Golgi network"/>
    <property type="evidence" value="ECO:0000314"/>
    <property type="project" value="UniProtKB"/>
</dbReference>
<dbReference type="GO" id="GO:0032588">
    <property type="term" value="C:trans-Golgi network membrane"/>
    <property type="evidence" value="ECO:0000304"/>
    <property type="project" value="Reactome"/>
</dbReference>
<dbReference type="GO" id="GO:0019905">
    <property type="term" value="F:syntaxin binding"/>
    <property type="evidence" value="ECO:0000318"/>
    <property type="project" value="GO_Central"/>
</dbReference>
<dbReference type="GO" id="GO:0006309">
    <property type="term" value="P:apoptotic DNA fragmentation"/>
    <property type="evidence" value="ECO:0007669"/>
    <property type="project" value="Ensembl"/>
</dbReference>
<dbReference type="GO" id="GO:0048708">
    <property type="term" value="P:astrocyte differentiation"/>
    <property type="evidence" value="ECO:0007669"/>
    <property type="project" value="Ensembl"/>
</dbReference>
<dbReference type="GO" id="GO:0071393">
    <property type="term" value="P:cellular response to progesterone stimulus"/>
    <property type="evidence" value="ECO:0007669"/>
    <property type="project" value="Ensembl"/>
</dbReference>
<dbReference type="GO" id="GO:0010467">
    <property type="term" value="P:gene expression"/>
    <property type="evidence" value="ECO:0007669"/>
    <property type="project" value="Ensembl"/>
</dbReference>
<dbReference type="GO" id="GO:0006896">
    <property type="term" value="P:Golgi to vacuole transport"/>
    <property type="evidence" value="ECO:0000318"/>
    <property type="project" value="GO_Central"/>
</dbReference>
<dbReference type="GO" id="GO:0048873">
    <property type="term" value="P:homeostasis of number of cells within a tissue"/>
    <property type="evidence" value="ECO:0007669"/>
    <property type="project" value="Ensembl"/>
</dbReference>
<dbReference type="GO" id="GO:0001701">
    <property type="term" value="P:in utero embryonic development"/>
    <property type="evidence" value="ECO:0007669"/>
    <property type="project" value="Ensembl"/>
</dbReference>
<dbReference type="GO" id="GO:0006874">
    <property type="term" value="P:intracellular calcium ion homeostasis"/>
    <property type="evidence" value="ECO:0007669"/>
    <property type="project" value="Ensembl"/>
</dbReference>
<dbReference type="GO" id="GO:0051938">
    <property type="term" value="P:L-glutamate import"/>
    <property type="evidence" value="ECO:0007669"/>
    <property type="project" value="Ensembl"/>
</dbReference>
<dbReference type="GO" id="GO:0007041">
    <property type="term" value="P:lysosomal transport"/>
    <property type="evidence" value="ECO:0000315"/>
    <property type="project" value="MGI"/>
</dbReference>
<dbReference type="GO" id="GO:0014004">
    <property type="term" value="P:microglia differentiation"/>
    <property type="evidence" value="ECO:0007669"/>
    <property type="project" value="Ensembl"/>
</dbReference>
<dbReference type="GO" id="GO:0007005">
    <property type="term" value="P:mitochondrion organization"/>
    <property type="evidence" value="ECO:0007669"/>
    <property type="project" value="Ensembl"/>
</dbReference>
<dbReference type="GO" id="GO:0061744">
    <property type="term" value="P:motor behavior"/>
    <property type="evidence" value="ECO:0007669"/>
    <property type="project" value="Ensembl"/>
</dbReference>
<dbReference type="GO" id="GO:0097049">
    <property type="term" value="P:motor neuron apoptotic process"/>
    <property type="evidence" value="ECO:0007669"/>
    <property type="project" value="Ensembl"/>
</dbReference>
<dbReference type="GO" id="GO:0050881">
    <property type="term" value="P:musculoskeletal movement"/>
    <property type="evidence" value="ECO:0007669"/>
    <property type="project" value="Ensembl"/>
</dbReference>
<dbReference type="GO" id="GO:2000672">
    <property type="term" value="P:negative regulation of motor neuron apoptotic process"/>
    <property type="evidence" value="ECO:0007669"/>
    <property type="project" value="Ensembl"/>
</dbReference>
<dbReference type="GO" id="GO:0097719">
    <property type="term" value="P:neural tissue regeneration"/>
    <property type="evidence" value="ECO:0007669"/>
    <property type="project" value="Ensembl"/>
</dbReference>
<dbReference type="GO" id="GO:0060052">
    <property type="term" value="P:neurofilament cytoskeleton organization"/>
    <property type="evidence" value="ECO:0007669"/>
    <property type="project" value="Ensembl"/>
</dbReference>
<dbReference type="GO" id="GO:0150076">
    <property type="term" value="P:neuroinflammatory response"/>
    <property type="evidence" value="ECO:0007669"/>
    <property type="project" value="Ensembl"/>
</dbReference>
<dbReference type="GO" id="GO:0007274">
    <property type="term" value="P:neuromuscular synaptic transmission"/>
    <property type="evidence" value="ECO:0007669"/>
    <property type="project" value="Ensembl"/>
</dbReference>
<dbReference type="GO" id="GO:0048812">
    <property type="term" value="P:neuron projection morphogenesis"/>
    <property type="evidence" value="ECO:0007669"/>
    <property type="project" value="Ensembl"/>
</dbReference>
<dbReference type="GO" id="GO:0035128">
    <property type="term" value="P:post-embryonic forelimb morphogenesis"/>
    <property type="evidence" value="ECO:0007669"/>
    <property type="project" value="Ensembl"/>
</dbReference>
<dbReference type="GO" id="GO:0034394">
    <property type="term" value="P:protein localization to cell surface"/>
    <property type="evidence" value="ECO:0007669"/>
    <property type="project" value="Ensembl"/>
</dbReference>
<dbReference type="GO" id="GO:0045047">
    <property type="term" value="P:protein targeting to ER"/>
    <property type="evidence" value="ECO:0007669"/>
    <property type="project" value="Ensembl"/>
</dbReference>
<dbReference type="GO" id="GO:0006622">
    <property type="term" value="P:protein targeting to lysosome"/>
    <property type="evidence" value="ECO:0007669"/>
    <property type="project" value="Ensembl"/>
</dbReference>
<dbReference type="GO" id="GO:0040008">
    <property type="term" value="P:regulation of growth"/>
    <property type="evidence" value="ECO:0007669"/>
    <property type="project" value="Ensembl"/>
</dbReference>
<dbReference type="GO" id="GO:0022904">
    <property type="term" value="P:respiratory electron transport chain"/>
    <property type="evidence" value="ECO:0007669"/>
    <property type="project" value="Ensembl"/>
</dbReference>
<dbReference type="GO" id="GO:0046677">
    <property type="term" value="P:response to antibiotic"/>
    <property type="evidence" value="ECO:0007669"/>
    <property type="project" value="Ensembl"/>
</dbReference>
<dbReference type="GO" id="GO:0051592">
    <property type="term" value="P:response to calcium ion"/>
    <property type="evidence" value="ECO:0007669"/>
    <property type="project" value="Ensembl"/>
</dbReference>
<dbReference type="GO" id="GO:0042147">
    <property type="term" value="P:retrograde transport, endosome to Golgi"/>
    <property type="evidence" value="ECO:0000315"/>
    <property type="project" value="MGI"/>
</dbReference>
<dbReference type="GO" id="GO:0048630">
    <property type="term" value="P:skeletal muscle tissue growth"/>
    <property type="evidence" value="ECO:0007669"/>
    <property type="project" value="Ensembl"/>
</dbReference>
<dbReference type="GO" id="GO:0048515">
    <property type="term" value="P:spermatid differentiation"/>
    <property type="evidence" value="ECO:0007669"/>
    <property type="project" value="Ensembl"/>
</dbReference>
<dbReference type="GO" id="GO:0030149">
    <property type="term" value="P:sphingolipid catabolic process"/>
    <property type="evidence" value="ECO:0007669"/>
    <property type="project" value="Ensembl"/>
</dbReference>
<dbReference type="GO" id="GO:0006941">
    <property type="term" value="P:striated muscle contraction"/>
    <property type="evidence" value="ECO:0007669"/>
    <property type="project" value="Ensembl"/>
</dbReference>
<dbReference type="GO" id="GO:0051932">
    <property type="term" value="P:synaptic transmission, GABAergic"/>
    <property type="evidence" value="ECO:0007669"/>
    <property type="project" value="Ensembl"/>
</dbReference>
<dbReference type="GO" id="GO:0035249">
    <property type="term" value="P:synaptic transmission, glutamatergic"/>
    <property type="evidence" value="ECO:0007669"/>
    <property type="project" value="Ensembl"/>
</dbReference>
<dbReference type="GO" id="GO:0070493">
    <property type="term" value="P:thrombin-activated receptor signaling pathway"/>
    <property type="evidence" value="ECO:0007669"/>
    <property type="project" value="Ensembl"/>
</dbReference>
<dbReference type="GO" id="GO:0010992">
    <property type="term" value="P:ubiquitin recycling"/>
    <property type="evidence" value="ECO:0007669"/>
    <property type="project" value="Ensembl"/>
</dbReference>
<dbReference type="GO" id="GO:0007033">
    <property type="term" value="P:vacuole organization"/>
    <property type="evidence" value="ECO:0007669"/>
    <property type="project" value="Ensembl"/>
</dbReference>
<dbReference type="GO" id="GO:0090119">
    <property type="term" value="P:vesicle-mediated cholesterol transport"/>
    <property type="evidence" value="ECO:0007669"/>
    <property type="project" value="Ensembl"/>
</dbReference>
<dbReference type="FunFam" id="1.20.1280.130:FF:000001">
    <property type="entry name" value="Vacuolar protein sorting-associated protein 54"/>
    <property type="match status" value="1"/>
</dbReference>
<dbReference type="Gene3D" id="1.20.1280.130">
    <property type="match status" value="1"/>
</dbReference>
<dbReference type="Gene3D" id="6.10.250.860">
    <property type="match status" value="1"/>
</dbReference>
<dbReference type="InterPro" id="IPR039745">
    <property type="entry name" value="Vps54"/>
</dbReference>
<dbReference type="InterPro" id="IPR012501">
    <property type="entry name" value="Vps54_C"/>
</dbReference>
<dbReference type="InterPro" id="IPR019515">
    <property type="entry name" value="VPS54_N"/>
</dbReference>
<dbReference type="PANTHER" id="PTHR12965">
    <property type="entry name" value="VACUOLAR PROTEIN SORTING 54"/>
    <property type="match status" value="1"/>
</dbReference>
<dbReference type="PANTHER" id="PTHR12965:SF0">
    <property type="entry name" value="VACUOLAR PROTEIN SORTING-ASSOCIATED PROTEIN 54"/>
    <property type="match status" value="1"/>
</dbReference>
<dbReference type="Pfam" id="PF07928">
    <property type="entry name" value="Vps54"/>
    <property type="match status" value="1"/>
</dbReference>
<dbReference type="Pfam" id="PF10475">
    <property type="entry name" value="Vps54_N"/>
    <property type="match status" value="1"/>
</dbReference>
<organism>
    <name type="scientific">Homo sapiens</name>
    <name type="common">Human</name>
    <dbReference type="NCBI Taxonomy" id="9606"/>
    <lineage>
        <taxon>Eukaryota</taxon>
        <taxon>Metazoa</taxon>
        <taxon>Chordata</taxon>
        <taxon>Craniata</taxon>
        <taxon>Vertebrata</taxon>
        <taxon>Euteleostomi</taxon>
        <taxon>Mammalia</taxon>
        <taxon>Eutheria</taxon>
        <taxon>Euarchontoglires</taxon>
        <taxon>Primates</taxon>
        <taxon>Haplorrhini</taxon>
        <taxon>Catarrhini</taxon>
        <taxon>Hominidae</taxon>
        <taxon>Homo</taxon>
    </lineage>
</organism>
<accession>Q9P1Q0</accession>
<accession>Q5VIR5</accession>
<accession>Q86YF7</accession>
<accession>Q8N6G3</accession>
<accession>Q9NPV0</accession>
<accession>Q9NT07</accession>
<accession>Q9NUJ0</accession>
<feature type="chain" id="PRO_0000148731" description="Vacuolar protein sorting-associated protein 54">
    <location>
        <begin position="1"/>
        <end position="977"/>
    </location>
</feature>
<feature type="region of interest" description="Disordered" evidence="3">
    <location>
        <begin position="535"/>
        <end position="575"/>
    </location>
</feature>
<feature type="coiled-coil region" evidence="2">
    <location>
        <begin position="240"/>
        <end position="260"/>
    </location>
</feature>
<feature type="coiled-coil region" evidence="2">
    <location>
        <begin position="480"/>
        <end position="507"/>
    </location>
</feature>
<feature type="coiled-coil region" evidence="2">
    <location>
        <begin position="582"/>
        <end position="603"/>
    </location>
</feature>
<feature type="compositionally biased region" description="Polar residues" evidence="3">
    <location>
        <begin position="535"/>
        <end position="552"/>
    </location>
</feature>
<feature type="modified residue" description="Phosphoserine" evidence="13">
    <location>
        <position position="8"/>
    </location>
</feature>
<feature type="splice variant" id="VSP_013751" description="In isoform 5." evidence="10">
    <location>
        <begin position="1"/>
        <end position="838"/>
    </location>
</feature>
<feature type="splice variant" id="VSP_013752" description="In isoform 3." evidence="9">
    <location>
        <begin position="1"/>
        <end position="117"/>
    </location>
</feature>
<feature type="splice variant" id="VSP_013753" description="In isoform 4." evidence="9">
    <location>
        <begin position="46"/>
        <end position="57"/>
    </location>
</feature>
<feature type="splice variant" id="VSP_013754" description="In isoform 3." evidence="9">
    <original>TVYQQEISQ</original>
    <variation>MLPTKNRIK</variation>
    <location>
        <begin position="118"/>
        <end position="126"/>
    </location>
</feature>
<feature type="splice variant" id="VSP_013755" description="In isoform 3." evidence="9">
    <location>
        <begin position="380"/>
        <end position="415"/>
    </location>
</feature>
<feature type="splice variant" id="VSP_013756" description="In isoform 2." evidence="11">
    <original>DLDLNMAEIWEQKR</original>
    <variation>IWT</variation>
    <location>
        <begin position="964"/>
        <end position="977"/>
    </location>
</feature>
<feature type="sequence variant" id="VAR_052944" description="In dbSNP:rs34015596.">
    <original>S</original>
    <variation>C</variation>
    <location>
        <position position="561"/>
    </location>
</feature>
<feature type="sequence variant" id="VAR_061983" description="In dbSNP:rs11558741.">
    <original>M</original>
    <variation>I</variation>
    <location>
        <position position="912"/>
    </location>
</feature>
<feature type="sequence conflict" description="In Ref. 1; AAF37319." evidence="12" ref="1">
    <original>I</original>
    <variation>V</variation>
    <location>
        <position position="130"/>
    </location>
</feature>
<feature type="sequence conflict" description="In Ref. 1; AAF37319." evidence="12" ref="1">
    <original>E</original>
    <variation>K</variation>
    <location>
        <position position="526"/>
    </location>
</feature>
<feature type="sequence conflict" description="In Ref. 1; AAF37319." evidence="12" ref="1">
    <original>E</original>
    <variation>G</variation>
    <location>
        <position position="601"/>
    </location>
</feature>
<feature type="sequence conflict" description="In Ref. 1; AAF37319." evidence="12" ref="1">
    <original>E</original>
    <variation>G</variation>
    <location>
        <position position="643"/>
    </location>
</feature>
<feature type="sequence conflict" description="In Ref. 1; AAF37319." evidence="12" ref="1">
    <original>E</original>
    <variation>A</variation>
    <location>
        <position position="650"/>
    </location>
</feature>
<feature type="sequence conflict" description="In Ref. 1; AAF37319." evidence="12" ref="1">
    <original>EER</original>
    <variation>VGG</variation>
    <location>
        <begin position="677"/>
        <end position="679"/>
    </location>
</feature>
<feature type="sequence conflict" description="In Ref. 5; BAA92134." evidence="12" ref="5">
    <original>K</original>
    <variation>E</variation>
    <location>
        <position position="727"/>
    </location>
</feature>
<feature type="sequence conflict" description="In Ref. 4; AAH41868." evidence="12" ref="4">
    <original>D</original>
    <variation>G</variation>
    <location>
        <position position="844"/>
    </location>
</feature>
<feature type="sequence conflict" description="In Ref. 4; AAH41868." evidence="12" ref="4">
    <original>L</original>
    <variation>H</variation>
    <location>
        <position position="904"/>
    </location>
</feature>
<comment type="function">
    <text evidence="5 6">Acts as a component of the GARP complex that is involved in retrograde transport from early and late endosomes to the trans-Golgi network (TGN). The GARP complex is required for the maintenance of the cycling of mannose 6-phosphate receptors between the TGN and endosomes, this cycling is necessary for proper lysosomal sorting of acid hydrolases such as CTSD (PubMed:18367545). Within the GARP complex, required to tether the complex to the TGN. Not involved in endocytic recycling (PubMed:25799061).</text>
</comment>
<comment type="subunit">
    <text evidence="4 6 7 8">Component of the Golgi-associated retrograde protein (GARP) complex, also called VFT (VPS fifty-three) complex, composed of VPS51, VPS52, VPS53 and VPS54 (PubMed:15878329, PubMed:25799061, PubMed:27440922). EIPR1 interacts with GARP complex and mediates its recruitment to the trans-Golgi network (PubMed:27440922). Interacts with VPS51 in an EIPR1-independent manner (PubMed:31721635).</text>
</comment>
<comment type="interaction">
    <interactant intactId="EBI-5235744">
        <id>Q9P1Q0</id>
    </interactant>
    <interactant intactId="EBI-2850511">
        <id>Q5VIR6</id>
        <label>VPS53</label>
    </interactant>
    <organismsDiffer>false</organismsDiffer>
    <experiments>4</experiments>
</comment>
<comment type="interaction">
    <interactant intactId="EBI-25835297">
        <id>Q9P1Q0-4</id>
    </interactant>
    <interactant intactId="EBI-718729">
        <id>P55212</id>
        <label>CASP6</label>
    </interactant>
    <organismsDiffer>false</organismsDiffer>
    <experiments>3</experiments>
</comment>
<comment type="interaction">
    <interactant intactId="EBI-25835297">
        <id>Q9P1Q0-4</id>
    </interactant>
    <interactant intactId="EBI-6624398">
        <id>P06307</id>
        <label>CCK</label>
    </interactant>
    <organismsDiffer>false</organismsDiffer>
    <experiments>3</experiments>
</comment>
<comment type="interaction">
    <interactant intactId="EBI-25835297">
        <id>Q9P1Q0-4</id>
    </interactant>
    <interactant intactId="EBI-348399">
        <id>P22607</id>
        <label>FGFR3</label>
    </interactant>
    <organismsDiffer>false</organismsDiffer>
    <experiments>3</experiments>
</comment>
<comment type="interaction">
    <interactant intactId="EBI-25835297">
        <id>Q9P1Q0-4</id>
    </interactant>
    <interactant intactId="EBI-8285963">
        <id>Q14957</id>
        <label>GRIN2C</label>
    </interactant>
    <organismsDiffer>false</organismsDiffer>
    <experiments>3</experiments>
</comment>
<comment type="interaction">
    <interactant intactId="EBI-25835297">
        <id>Q9P1Q0-4</id>
    </interactant>
    <interactant intactId="EBI-351506">
        <id>P06396</id>
        <label>GSN</label>
    </interactant>
    <organismsDiffer>false</organismsDiffer>
    <experiments>3</experiments>
</comment>
<comment type="interaction">
    <interactant intactId="EBI-25835297">
        <id>Q9P1Q0-4</id>
    </interactant>
    <interactant intactId="EBI-473886">
        <id>O00291</id>
        <label>HIP1</label>
    </interactant>
    <organismsDiffer>false</organismsDiffer>
    <experiments>3</experiments>
</comment>
<comment type="interaction">
    <interactant intactId="EBI-25835297">
        <id>Q9P1Q0-4</id>
    </interactant>
    <interactant intactId="EBI-21591415">
        <id>P13473-2</id>
        <label>LAMP2</label>
    </interactant>
    <organismsDiffer>false</organismsDiffer>
    <experiments>3</experiments>
</comment>
<comment type="interaction">
    <interactant intactId="EBI-25835297">
        <id>Q9P1Q0-4</id>
    </interactant>
    <interactant intactId="EBI-286642">
        <id>P62826</id>
        <label>RAN</label>
    </interactant>
    <organismsDiffer>false</organismsDiffer>
    <experiments>3</experiments>
</comment>
<comment type="interaction">
    <interactant intactId="EBI-25835297">
        <id>Q9P1Q0-4</id>
    </interactant>
    <interactant intactId="EBI-741480">
        <id>Q9UMX0</id>
        <label>UBQLN1</label>
    </interactant>
    <organismsDiffer>false</organismsDiffer>
    <experiments>3</experiments>
</comment>
<comment type="interaction">
    <interactant intactId="EBI-25835297">
        <id>Q9P1Q0-4</id>
    </interactant>
    <interactant intactId="EBI-25900580">
        <id>Q9Y649</id>
    </interactant>
    <organismsDiffer>false</organismsDiffer>
    <experiments>3</experiments>
</comment>
<comment type="subcellular location">
    <subcellularLocation>
        <location evidence="5 6">Golgi apparatus</location>
        <location evidence="5 6">trans-Golgi network</location>
    </subcellularLocation>
    <subcellularLocation>
        <location evidence="1">Membrane</location>
    </subcellularLocation>
    <text evidence="1">Associates with membranes in an EIPR1-independent manner.</text>
</comment>
<comment type="alternative products">
    <event type="alternative splicing"/>
    <isoform>
        <id>Q9P1Q0-1</id>
        <name>1</name>
        <sequence type="displayed"/>
    </isoform>
    <isoform>
        <id>Q9P1Q0-2</id>
        <name>2</name>
        <sequence type="described" ref="VSP_013756"/>
    </isoform>
    <isoform>
        <id>Q9P1Q0-3</id>
        <name>3</name>
        <sequence type="described" ref="VSP_013752 VSP_013754 VSP_013755"/>
    </isoform>
    <isoform>
        <id>Q9P1Q0-4</id>
        <name>4</name>
        <sequence type="described" ref="VSP_013753"/>
    </isoform>
    <isoform>
        <id>Q9P1Q0-5</id>
        <name>5</name>
        <sequence type="described" ref="VSP_013751"/>
    </isoform>
</comment>
<comment type="similarity">
    <text evidence="12">Belongs to the VPS54 family.</text>
</comment>
<comment type="sequence caution" evidence="12">
    <conflict type="erroneous initiation">
        <sequence resource="EMBL-CDS" id="BAA92134"/>
    </conflict>
</comment>
<name>VPS54_HUMAN</name>